<reference key="1">
    <citation type="journal article" date="2011" name="Stand. Genomic Sci.">
        <title>Complete genome sequence of 'Thioalkalivibrio sulfidophilus' HL-EbGr7.</title>
        <authorList>
            <person name="Muyzer G."/>
            <person name="Sorokin D.Y."/>
            <person name="Mavromatis K."/>
            <person name="Lapidus A."/>
            <person name="Clum A."/>
            <person name="Ivanova N."/>
            <person name="Pati A."/>
            <person name="d'Haeseleer P."/>
            <person name="Woyke T."/>
            <person name="Kyrpides N.C."/>
        </authorList>
    </citation>
    <scope>NUCLEOTIDE SEQUENCE [LARGE SCALE GENOMIC DNA]</scope>
    <source>
        <strain>HL-EbGR7</strain>
    </source>
</reference>
<dbReference type="EC" id="5.6.1.7" evidence="1"/>
<dbReference type="EMBL" id="CP001339">
    <property type="protein sequence ID" value="ACL71537.1"/>
    <property type="molecule type" value="Genomic_DNA"/>
</dbReference>
<dbReference type="RefSeq" id="WP_012637026.1">
    <property type="nucleotide sequence ID" value="NC_011901.1"/>
</dbReference>
<dbReference type="SMR" id="B8GL19"/>
<dbReference type="STRING" id="396588.Tgr7_0439"/>
<dbReference type="KEGG" id="tgr:Tgr7_0439"/>
<dbReference type="eggNOG" id="COG0459">
    <property type="taxonomic scope" value="Bacteria"/>
</dbReference>
<dbReference type="HOGENOM" id="CLU_016503_3_0_6"/>
<dbReference type="OrthoDB" id="9766614at2"/>
<dbReference type="Proteomes" id="UP000002383">
    <property type="component" value="Chromosome"/>
</dbReference>
<dbReference type="GO" id="GO:0005737">
    <property type="term" value="C:cytoplasm"/>
    <property type="evidence" value="ECO:0007669"/>
    <property type="project" value="UniProtKB-SubCell"/>
</dbReference>
<dbReference type="GO" id="GO:0005524">
    <property type="term" value="F:ATP binding"/>
    <property type="evidence" value="ECO:0007669"/>
    <property type="project" value="UniProtKB-UniRule"/>
</dbReference>
<dbReference type="GO" id="GO:0140662">
    <property type="term" value="F:ATP-dependent protein folding chaperone"/>
    <property type="evidence" value="ECO:0007669"/>
    <property type="project" value="InterPro"/>
</dbReference>
<dbReference type="GO" id="GO:0016853">
    <property type="term" value="F:isomerase activity"/>
    <property type="evidence" value="ECO:0007669"/>
    <property type="project" value="UniProtKB-KW"/>
</dbReference>
<dbReference type="GO" id="GO:0051082">
    <property type="term" value="F:unfolded protein binding"/>
    <property type="evidence" value="ECO:0007669"/>
    <property type="project" value="UniProtKB-UniRule"/>
</dbReference>
<dbReference type="GO" id="GO:0042026">
    <property type="term" value="P:protein refolding"/>
    <property type="evidence" value="ECO:0007669"/>
    <property type="project" value="UniProtKB-UniRule"/>
</dbReference>
<dbReference type="CDD" id="cd03344">
    <property type="entry name" value="GroEL"/>
    <property type="match status" value="1"/>
</dbReference>
<dbReference type="FunFam" id="1.10.560.10:FF:000001">
    <property type="entry name" value="60 kDa chaperonin"/>
    <property type="match status" value="1"/>
</dbReference>
<dbReference type="FunFam" id="3.50.7.10:FF:000001">
    <property type="entry name" value="60 kDa chaperonin"/>
    <property type="match status" value="1"/>
</dbReference>
<dbReference type="Gene3D" id="3.50.7.10">
    <property type="entry name" value="GroEL"/>
    <property type="match status" value="1"/>
</dbReference>
<dbReference type="Gene3D" id="1.10.560.10">
    <property type="entry name" value="GroEL-like equatorial domain"/>
    <property type="match status" value="1"/>
</dbReference>
<dbReference type="Gene3D" id="3.30.260.10">
    <property type="entry name" value="TCP-1-like chaperonin intermediate domain"/>
    <property type="match status" value="1"/>
</dbReference>
<dbReference type="HAMAP" id="MF_00600">
    <property type="entry name" value="CH60"/>
    <property type="match status" value="1"/>
</dbReference>
<dbReference type="InterPro" id="IPR018370">
    <property type="entry name" value="Chaperonin_Cpn60_CS"/>
</dbReference>
<dbReference type="InterPro" id="IPR001844">
    <property type="entry name" value="Cpn60/GroEL"/>
</dbReference>
<dbReference type="InterPro" id="IPR002423">
    <property type="entry name" value="Cpn60/GroEL/TCP-1"/>
</dbReference>
<dbReference type="InterPro" id="IPR027409">
    <property type="entry name" value="GroEL-like_apical_dom_sf"/>
</dbReference>
<dbReference type="InterPro" id="IPR027413">
    <property type="entry name" value="GROEL-like_equatorial_sf"/>
</dbReference>
<dbReference type="InterPro" id="IPR027410">
    <property type="entry name" value="TCP-1-like_intermed_sf"/>
</dbReference>
<dbReference type="NCBIfam" id="TIGR02348">
    <property type="entry name" value="GroEL"/>
    <property type="match status" value="1"/>
</dbReference>
<dbReference type="NCBIfam" id="NF000592">
    <property type="entry name" value="PRK00013.1"/>
    <property type="match status" value="1"/>
</dbReference>
<dbReference type="NCBIfam" id="NF009487">
    <property type="entry name" value="PRK12849.1"/>
    <property type="match status" value="1"/>
</dbReference>
<dbReference type="NCBIfam" id="NF009488">
    <property type="entry name" value="PRK12850.1"/>
    <property type="match status" value="1"/>
</dbReference>
<dbReference type="NCBIfam" id="NF009489">
    <property type="entry name" value="PRK12851.1"/>
    <property type="match status" value="1"/>
</dbReference>
<dbReference type="PANTHER" id="PTHR45633">
    <property type="entry name" value="60 KDA HEAT SHOCK PROTEIN, MITOCHONDRIAL"/>
    <property type="match status" value="1"/>
</dbReference>
<dbReference type="Pfam" id="PF00118">
    <property type="entry name" value="Cpn60_TCP1"/>
    <property type="match status" value="1"/>
</dbReference>
<dbReference type="PRINTS" id="PR00298">
    <property type="entry name" value="CHAPERONIN60"/>
</dbReference>
<dbReference type="SUPFAM" id="SSF52029">
    <property type="entry name" value="GroEL apical domain-like"/>
    <property type="match status" value="1"/>
</dbReference>
<dbReference type="SUPFAM" id="SSF48592">
    <property type="entry name" value="GroEL equatorial domain-like"/>
    <property type="match status" value="1"/>
</dbReference>
<dbReference type="SUPFAM" id="SSF54849">
    <property type="entry name" value="GroEL-intermediate domain like"/>
    <property type="match status" value="1"/>
</dbReference>
<dbReference type="PROSITE" id="PS00296">
    <property type="entry name" value="CHAPERONINS_CPN60"/>
    <property type="match status" value="1"/>
</dbReference>
<feature type="chain" id="PRO_1000147050" description="Chaperonin GroEL">
    <location>
        <begin position="1"/>
        <end position="546"/>
    </location>
</feature>
<feature type="region of interest" description="Disordered" evidence="2">
    <location>
        <begin position="526"/>
        <end position="546"/>
    </location>
</feature>
<feature type="compositionally biased region" description="Gly residues" evidence="2">
    <location>
        <begin position="533"/>
        <end position="546"/>
    </location>
</feature>
<feature type="binding site" evidence="1">
    <location>
        <begin position="30"/>
        <end position="33"/>
    </location>
    <ligand>
        <name>ATP</name>
        <dbReference type="ChEBI" id="CHEBI:30616"/>
    </ligand>
</feature>
<feature type="binding site" evidence="1">
    <location>
        <position position="51"/>
    </location>
    <ligand>
        <name>ATP</name>
        <dbReference type="ChEBI" id="CHEBI:30616"/>
    </ligand>
</feature>
<feature type="binding site" evidence="1">
    <location>
        <begin position="87"/>
        <end position="91"/>
    </location>
    <ligand>
        <name>ATP</name>
        <dbReference type="ChEBI" id="CHEBI:30616"/>
    </ligand>
</feature>
<feature type="binding site" evidence="1">
    <location>
        <position position="415"/>
    </location>
    <ligand>
        <name>ATP</name>
        <dbReference type="ChEBI" id="CHEBI:30616"/>
    </ligand>
</feature>
<feature type="binding site" evidence="1">
    <location>
        <begin position="479"/>
        <end position="481"/>
    </location>
    <ligand>
        <name>ATP</name>
        <dbReference type="ChEBI" id="CHEBI:30616"/>
    </ligand>
</feature>
<feature type="binding site" evidence="1">
    <location>
        <position position="495"/>
    </location>
    <ligand>
        <name>ATP</name>
        <dbReference type="ChEBI" id="CHEBI:30616"/>
    </ligand>
</feature>
<accession>B8GL19</accession>
<evidence type="ECO:0000255" key="1">
    <source>
        <dbReference type="HAMAP-Rule" id="MF_00600"/>
    </source>
</evidence>
<evidence type="ECO:0000256" key="2">
    <source>
        <dbReference type="SAM" id="MobiDB-lite"/>
    </source>
</evidence>
<sequence>MSAKEVRFSDDARSRMVRGVNVLANAVKVTLGPKGRNVVLEKSFGAPTVTKDGVSVAKEIELEDKFENMGAQMVKEVSSQTSDIAGDGTTTATVLAQAIVREGMKSVTAGMNPMDLKRGIDKAVIAAVEELKKLSKPCTDSKAIAQVGTISANSDESIGQIIADAMAKVGKEGVITVEEGSSLENELDVVEGMQFDRGYLSPYFVNNQQNMSAELDDCFVLLYDKKISNIRDLLPVLEGVAKAGKPLLIIAEDIEGEALATLVVNTIRGIVKVAAVKAPGFGDRRKAMLQDIAILTGGQVISEEVGLSLEKASLDDLGQAKRIVVTKENSTIIDGAGKPDEIKGRVEQIRAQIEDATSDYDKEKLQERVAKLAGGVAVIKVGAATEVEMKEKKARVEDALHATRAAVEEGVVPGGGVALVRALQALKSLKGANHDQDIGIAIARRAMEEPLRQIVSNCGEEPSVVLNNVVEGKGNYGYNAATGEYGDMIEMGILDPTKVTRSALQNAASVSGLIITTEAMVAELPKKGDSAPAGGGMGDMGGMGMM</sequence>
<protein>
    <recommendedName>
        <fullName evidence="1">Chaperonin GroEL</fullName>
        <ecNumber evidence="1">5.6.1.7</ecNumber>
    </recommendedName>
    <alternativeName>
        <fullName evidence="1">60 kDa chaperonin</fullName>
    </alternativeName>
    <alternativeName>
        <fullName evidence="1">Chaperonin-60</fullName>
        <shortName evidence="1">Cpn60</shortName>
    </alternativeName>
</protein>
<proteinExistence type="inferred from homology"/>
<organism>
    <name type="scientific">Thioalkalivibrio sulfidiphilus (strain HL-EbGR7)</name>
    <dbReference type="NCBI Taxonomy" id="396588"/>
    <lineage>
        <taxon>Bacteria</taxon>
        <taxon>Pseudomonadati</taxon>
        <taxon>Pseudomonadota</taxon>
        <taxon>Gammaproteobacteria</taxon>
        <taxon>Chromatiales</taxon>
        <taxon>Ectothiorhodospiraceae</taxon>
        <taxon>Thioalkalivibrio</taxon>
    </lineage>
</organism>
<keyword id="KW-0067">ATP-binding</keyword>
<keyword id="KW-0143">Chaperone</keyword>
<keyword id="KW-0963">Cytoplasm</keyword>
<keyword id="KW-0413">Isomerase</keyword>
<keyword id="KW-0547">Nucleotide-binding</keyword>
<keyword id="KW-1185">Reference proteome</keyword>
<gene>
    <name evidence="1" type="primary">groEL</name>
    <name evidence="1" type="synonym">groL</name>
    <name type="ordered locus">Tgr7_0439</name>
</gene>
<comment type="function">
    <text evidence="1">Together with its co-chaperonin GroES, plays an essential role in assisting protein folding. The GroEL-GroES system forms a nano-cage that allows encapsulation of the non-native substrate proteins and provides a physical environment optimized to promote and accelerate protein folding.</text>
</comment>
<comment type="catalytic activity">
    <reaction evidence="1">
        <text>ATP + H2O + a folded polypeptide = ADP + phosphate + an unfolded polypeptide.</text>
        <dbReference type="EC" id="5.6.1.7"/>
    </reaction>
</comment>
<comment type="subunit">
    <text evidence="1">Forms a cylinder of 14 subunits composed of two heptameric rings stacked back-to-back. Interacts with the co-chaperonin GroES.</text>
</comment>
<comment type="subcellular location">
    <subcellularLocation>
        <location evidence="1">Cytoplasm</location>
    </subcellularLocation>
</comment>
<comment type="similarity">
    <text evidence="1">Belongs to the chaperonin (HSP60) family.</text>
</comment>
<name>CH60_THISH</name>